<gene>
    <name type="primary">Tctn2</name>
    <name type="synonym">Tect2</name>
</gene>
<keyword id="KW-0966">Cell projection</keyword>
<keyword id="KW-0970">Cilium biogenesis/degradation</keyword>
<keyword id="KW-0963">Cytoplasm</keyword>
<keyword id="KW-0206">Cytoskeleton</keyword>
<keyword id="KW-0325">Glycoprotein</keyword>
<keyword id="KW-0472">Membrane</keyword>
<keyword id="KW-1185">Reference proteome</keyword>
<keyword id="KW-0732">Signal</keyword>
<keyword id="KW-0812">Transmembrane</keyword>
<keyword id="KW-1133">Transmembrane helix</keyword>
<accession>Q3B7D3</accession>
<evidence type="ECO:0000250" key="1"/>
<evidence type="ECO:0000255" key="2"/>
<evidence type="ECO:0000305" key="3"/>
<dbReference type="EMBL" id="BC107658">
    <property type="protein sequence ID" value="AAI07659.1"/>
    <property type="molecule type" value="mRNA"/>
</dbReference>
<dbReference type="RefSeq" id="NP_001074251.1">
    <property type="nucleotide sequence ID" value="NM_001080782.1"/>
</dbReference>
<dbReference type="FunCoup" id="Q3B7D3">
    <property type="interactions" value="983"/>
</dbReference>
<dbReference type="STRING" id="10116.ENSRNOP00000073487"/>
<dbReference type="GlyCosmos" id="Q3B7D3">
    <property type="glycosylation" value="5 sites, No reported glycans"/>
</dbReference>
<dbReference type="GlyGen" id="Q3B7D3">
    <property type="glycosylation" value="5 sites"/>
</dbReference>
<dbReference type="PhosphoSitePlus" id="Q3B7D3"/>
<dbReference type="PaxDb" id="10116-ENSRNOP00000001349"/>
<dbReference type="Ensembl" id="ENSRNOT00000084553.2">
    <property type="protein sequence ID" value="ENSRNOP00000072568.1"/>
    <property type="gene ID" value="ENSRNOG00000052704.2"/>
</dbReference>
<dbReference type="GeneID" id="689779"/>
<dbReference type="KEGG" id="rno:689779"/>
<dbReference type="UCSC" id="RGD:1591895">
    <property type="organism name" value="rat"/>
</dbReference>
<dbReference type="AGR" id="RGD:1591895"/>
<dbReference type="CTD" id="79867"/>
<dbReference type="RGD" id="1591895">
    <property type="gene designation" value="Tctn2"/>
</dbReference>
<dbReference type="eggNOG" id="KOG2189">
    <property type="taxonomic scope" value="Eukaryota"/>
</dbReference>
<dbReference type="GeneTree" id="ENSGT00940000154642"/>
<dbReference type="HOGENOM" id="CLU_025134_0_0_1"/>
<dbReference type="InParanoid" id="Q3B7D3"/>
<dbReference type="OrthoDB" id="60716at9989"/>
<dbReference type="Reactome" id="R-RNO-5620912">
    <property type="pathway name" value="Anchoring of the basal body to the plasma membrane"/>
</dbReference>
<dbReference type="PRO" id="PR:Q3B7D3"/>
<dbReference type="Proteomes" id="UP000002494">
    <property type="component" value="Chromosome 12"/>
</dbReference>
<dbReference type="Bgee" id="ENSRNOG00000052704">
    <property type="expression patterns" value="Expressed in jejunum and 19 other cell types or tissues"/>
</dbReference>
<dbReference type="ExpressionAtlas" id="Q3B7D3">
    <property type="expression patterns" value="baseline and differential"/>
</dbReference>
<dbReference type="GO" id="GO:0035869">
    <property type="term" value="C:ciliary transition zone"/>
    <property type="evidence" value="ECO:0000266"/>
    <property type="project" value="RGD"/>
</dbReference>
<dbReference type="GO" id="GO:0005737">
    <property type="term" value="C:cytoplasm"/>
    <property type="evidence" value="ECO:0007669"/>
    <property type="project" value="UniProtKB-KW"/>
</dbReference>
<dbReference type="GO" id="GO:0005856">
    <property type="term" value="C:cytoskeleton"/>
    <property type="evidence" value="ECO:0007669"/>
    <property type="project" value="UniProtKB-KW"/>
</dbReference>
<dbReference type="GO" id="GO:0016020">
    <property type="term" value="C:membrane"/>
    <property type="evidence" value="ECO:0007669"/>
    <property type="project" value="UniProtKB-SubCell"/>
</dbReference>
<dbReference type="GO" id="GO:0036038">
    <property type="term" value="C:MKS complex"/>
    <property type="evidence" value="ECO:0000250"/>
    <property type="project" value="UniProtKB"/>
</dbReference>
<dbReference type="GO" id="GO:0060271">
    <property type="term" value="P:cilium assembly"/>
    <property type="evidence" value="ECO:0000250"/>
    <property type="project" value="UniProtKB"/>
</dbReference>
<dbReference type="GO" id="GO:1904491">
    <property type="term" value="P:protein localization to ciliary transition zone"/>
    <property type="evidence" value="ECO:0000266"/>
    <property type="project" value="RGD"/>
</dbReference>
<dbReference type="GO" id="GO:0007224">
    <property type="term" value="P:smoothened signaling pathway"/>
    <property type="evidence" value="ECO:0000250"/>
    <property type="project" value="UniProtKB"/>
</dbReference>
<dbReference type="InterPro" id="IPR040354">
    <property type="entry name" value="Tectonic"/>
</dbReference>
<dbReference type="InterPro" id="IPR011677">
    <property type="entry name" value="Tectonic_dom"/>
</dbReference>
<dbReference type="PANTHER" id="PTHR14611">
    <property type="entry name" value="TECTONIC FAMILY MEMBER"/>
    <property type="match status" value="1"/>
</dbReference>
<dbReference type="PANTHER" id="PTHR14611:SF6">
    <property type="entry name" value="TECTONIC-2"/>
    <property type="match status" value="1"/>
</dbReference>
<dbReference type="Pfam" id="PF07773">
    <property type="entry name" value="TCTN_DUF1619"/>
    <property type="match status" value="1"/>
</dbReference>
<reference key="1">
    <citation type="journal article" date="2004" name="Genome Res.">
        <title>The status, quality, and expansion of the NIH full-length cDNA project: the Mammalian Gene Collection (MGC).</title>
        <authorList>
            <consortium name="The MGC Project Team"/>
        </authorList>
    </citation>
    <scope>NUCLEOTIDE SEQUENCE [LARGE SCALE MRNA]</scope>
    <source>
        <tissue>Prostate</tissue>
    </source>
</reference>
<protein>
    <recommendedName>
        <fullName>Tectonic-2</fullName>
    </recommendedName>
</protein>
<feature type="signal peptide" evidence="2">
    <location>
        <begin position="1"/>
        <end position="25"/>
    </location>
</feature>
<feature type="chain" id="PRO_0000229800" description="Tectonic-2">
    <location>
        <begin position="26"/>
        <end position="700"/>
    </location>
</feature>
<feature type="topological domain" description="Extracellular" evidence="2">
    <location>
        <begin position="26"/>
        <end position="665"/>
    </location>
</feature>
<feature type="transmembrane region" description="Helical" evidence="2">
    <location>
        <begin position="666"/>
        <end position="682"/>
    </location>
</feature>
<feature type="topological domain" description="Cytoplasmic" evidence="2">
    <location>
        <begin position="683"/>
        <end position="700"/>
    </location>
</feature>
<feature type="glycosylation site" description="N-linked (GlcNAc...) asparagine" evidence="2">
    <location>
        <position position="76"/>
    </location>
</feature>
<feature type="glycosylation site" description="N-linked (GlcNAc...) asparagine" evidence="2">
    <location>
        <position position="82"/>
    </location>
</feature>
<feature type="glycosylation site" description="N-linked (GlcNAc...) asparagine" evidence="2">
    <location>
        <position position="146"/>
    </location>
</feature>
<feature type="glycosylation site" description="N-linked (GlcNAc...) asparagine" evidence="2">
    <location>
        <position position="156"/>
    </location>
</feature>
<feature type="glycosylation site" description="N-linked (GlcNAc...) asparagine" evidence="2">
    <location>
        <position position="389"/>
    </location>
</feature>
<organism>
    <name type="scientific">Rattus norvegicus</name>
    <name type="common">Rat</name>
    <dbReference type="NCBI Taxonomy" id="10116"/>
    <lineage>
        <taxon>Eukaryota</taxon>
        <taxon>Metazoa</taxon>
        <taxon>Chordata</taxon>
        <taxon>Craniata</taxon>
        <taxon>Vertebrata</taxon>
        <taxon>Euteleostomi</taxon>
        <taxon>Mammalia</taxon>
        <taxon>Eutheria</taxon>
        <taxon>Euarchontoglires</taxon>
        <taxon>Glires</taxon>
        <taxon>Rodentia</taxon>
        <taxon>Myomorpha</taxon>
        <taxon>Muroidea</taxon>
        <taxon>Muridae</taxon>
        <taxon>Murinae</taxon>
        <taxon>Rattus</taxon>
    </lineage>
</organism>
<name>TECT2_RAT</name>
<comment type="function">
    <text evidence="1">Component of the tectonic-like complex, a complex localized at the transition zone of primary cilia and acting as a barrier that prevents diffusion of transmembrane proteins between the cilia and plasma membranes. Required for hedgehog signaling transduction (By similarity).</text>
</comment>
<comment type="subunit">
    <text evidence="1">Part of the tectonic-like complex (also named B9 complex).</text>
</comment>
<comment type="subcellular location">
    <subcellularLocation>
        <location evidence="3">Membrane</location>
        <topology evidence="3">Single-pass type I membrane protein</topology>
    </subcellularLocation>
    <subcellularLocation>
        <location evidence="1">Cytoplasm</location>
        <location evidence="1">Cytoskeleton</location>
        <location evidence="1">Cilium basal body</location>
    </subcellularLocation>
    <text evidence="1">Localizes at the transition zone, a region between the basal body and the ciliary axoneme.</text>
</comment>
<comment type="similarity">
    <text evidence="3">Belongs to the tectonic family.</text>
</comment>
<proteinExistence type="evidence at transcript level"/>
<sequence length="700" mass="77301">MGSLSPLSFLWGLLLLQGVLRPLRGDPVFIPPFIRMSSPEVRASLVGGSEDVTVSLTPLQIKEGVLPVPTCGGLRNETGDWNLTVSPQANMLEVTVRWKRGLDWCSPDETASFSEAPCIVQTLLVSASHNASCLAHLLIQVEIYPNTSVTHNASENMTVIPNQVYQPLGPCPCDLTAKACDIRCCCDQDCQPELRELFERFCFSGVFGGYVSPPSHHRCAARTTHQTPDWFPFLCVQSPPSTSPFLGHFYHGAISPRHSPGFETHSHLDLRDFFADASYKQGDPIMTTNGYFTIPQASLAGQCLQDAPVAFLRNFHSVCTTDLEVQERDRLIPEDMRIRTTGGLVTPTVTYEEATDLDKLITSPDTILSAGSAPRNVTVEEHYVFRWQNNSISSLDITIIRAEINAHQRGTMTQRFTVKFLSPNSGGEKEFSGNPGYQLGKPVRALHTDGMNVTTLHLWQPAGRGLCTSAALRPVLFGEDASSGCLLEVGIKENCTQLRENVLQRLDLLIQATHVARRGNSDYGDLSDGWLEVIRVDAPDAGADLPLSSANGMCPEVPTHVTIRILTAEAGAVEGEAQREILAVETRFSTVTWQYQCGLTCEEDKADLLPLSASVKFINIPAQMPRPTRFQINFTEYDCTRNELCWPQLLYPLTQYYQGEPRPQCVAKGLMLLSLLMLAILLRHPWVGMCKAWSSASIQH</sequence>